<gene>
    <name evidence="1" type="primary">pyrF</name>
    <name type="ordered locus">CLM_3650</name>
</gene>
<evidence type="ECO:0000255" key="1">
    <source>
        <dbReference type="HAMAP-Rule" id="MF_01215"/>
    </source>
</evidence>
<name>PYRF_CLOBJ</name>
<organism>
    <name type="scientific">Clostridium botulinum (strain Kyoto / Type A2)</name>
    <dbReference type="NCBI Taxonomy" id="536232"/>
    <lineage>
        <taxon>Bacteria</taxon>
        <taxon>Bacillati</taxon>
        <taxon>Bacillota</taxon>
        <taxon>Clostridia</taxon>
        <taxon>Eubacteriales</taxon>
        <taxon>Clostridiaceae</taxon>
        <taxon>Clostridium</taxon>
    </lineage>
</organism>
<reference key="1">
    <citation type="submission" date="2008-10" db="EMBL/GenBank/DDBJ databases">
        <title>Genome sequence of Clostridium botulinum A2 Kyoto.</title>
        <authorList>
            <person name="Shrivastava S."/>
            <person name="Brinkac L.M."/>
            <person name="Brown J.L."/>
            <person name="Bruce D."/>
            <person name="Detter C.C."/>
            <person name="Johnson E.A."/>
            <person name="Munk C.A."/>
            <person name="Smith L.A."/>
            <person name="Smith T.J."/>
            <person name="Sutton G."/>
            <person name="Brettin T.S."/>
        </authorList>
    </citation>
    <scope>NUCLEOTIDE SEQUENCE [LARGE SCALE GENOMIC DNA]</scope>
    <source>
        <strain>Kyoto / Type A2</strain>
    </source>
</reference>
<dbReference type="EC" id="4.1.1.23" evidence="1"/>
<dbReference type="EMBL" id="CP001581">
    <property type="protein sequence ID" value="ACO83525.1"/>
    <property type="molecule type" value="Genomic_DNA"/>
</dbReference>
<dbReference type="RefSeq" id="WP_012703736.1">
    <property type="nucleotide sequence ID" value="NC_012563.1"/>
</dbReference>
<dbReference type="SMR" id="C1FLB3"/>
<dbReference type="KEGG" id="cby:CLM_3650"/>
<dbReference type="eggNOG" id="COG0284">
    <property type="taxonomic scope" value="Bacteria"/>
</dbReference>
<dbReference type="HOGENOM" id="CLU_060704_1_1_9"/>
<dbReference type="UniPathway" id="UPA00070">
    <property type="reaction ID" value="UER00120"/>
</dbReference>
<dbReference type="Proteomes" id="UP000001374">
    <property type="component" value="Chromosome"/>
</dbReference>
<dbReference type="GO" id="GO:0004590">
    <property type="term" value="F:orotidine-5'-phosphate decarboxylase activity"/>
    <property type="evidence" value="ECO:0007669"/>
    <property type="project" value="UniProtKB-UniRule"/>
</dbReference>
<dbReference type="GO" id="GO:0006207">
    <property type="term" value="P:'de novo' pyrimidine nucleobase biosynthetic process"/>
    <property type="evidence" value="ECO:0007669"/>
    <property type="project" value="InterPro"/>
</dbReference>
<dbReference type="GO" id="GO:0044205">
    <property type="term" value="P:'de novo' UMP biosynthetic process"/>
    <property type="evidence" value="ECO:0007669"/>
    <property type="project" value="UniProtKB-UniRule"/>
</dbReference>
<dbReference type="CDD" id="cd04725">
    <property type="entry name" value="OMP_decarboxylase_like"/>
    <property type="match status" value="1"/>
</dbReference>
<dbReference type="FunFam" id="3.20.20.70:FF:000246">
    <property type="entry name" value="Orotidine 5'-phosphate decarboxylase"/>
    <property type="match status" value="1"/>
</dbReference>
<dbReference type="Gene3D" id="3.20.20.70">
    <property type="entry name" value="Aldolase class I"/>
    <property type="match status" value="1"/>
</dbReference>
<dbReference type="HAMAP" id="MF_01215">
    <property type="entry name" value="OMPdecase_type2"/>
    <property type="match status" value="1"/>
</dbReference>
<dbReference type="InterPro" id="IPR013785">
    <property type="entry name" value="Aldolase_TIM"/>
</dbReference>
<dbReference type="InterPro" id="IPR011995">
    <property type="entry name" value="OMPdecase_type-2"/>
</dbReference>
<dbReference type="InterPro" id="IPR001754">
    <property type="entry name" value="OMPdeCOase_dom"/>
</dbReference>
<dbReference type="InterPro" id="IPR011060">
    <property type="entry name" value="RibuloseP-bd_barrel"/>
</dbReference>
<dbReference type="NCBIfam" id="TIGR02127">
    <property type="entry name" value="pyrF_sub2"/>
    <property type="match status" value="1"/>
</dbReference>
<dbReference type="PANTHER" id="PTHR43375">
    <property type="entry name" value="OROTIDINE 5'-PHOSPHATE DECARBOXYLASE"/>
    <property type="match status" value="1"/>
</dbReference>
<dbReference type="PANTHER" id="PTHR43375:SF1">
    <property type="entry name" value="OROTIDINE 5'-PHOSPHATE DECARBOXYLASE"/>
    <property type="match status" value="1"/>
</dbReference>
<dbReference type="Pfam" id="PF00215">
    <property type="entry name" value="OMPdecase"/>
    <property type="match status" value="1"/>
</dbReference>
<dbReference type="SMART" id="SM00934">
    <property type="entry name" value="OMPdecase"/>
    <property type="match status" value="1"/>
</dbReference>
<dbReference type="SUPFAM" id="SSF51366">
    <property type="entry name" value="Ribulose-phoshate binding barrel"/>
    <property type="match status" value="1"/>
</dbReference>
<comment type="catalytic activity">
    <reaction evidence="1">
        <text>orotidine 5'-phosphate + H(+) = UMP + CO2</text>
        <dbReference type="Rhea" id="RHEA:11596"/>
        <dbReference type="ChEBI" id="CHEBI:15378"/>
        <dbReference type="ChEBI" id="CHEBI:16526"/>
        <dbReference type="ChEBI" id="CHEBI:57538"/>
        <dbReference type="ChEBI" id="CHEBI:57865"/>
        <dbReference type="EC" id="4.1.1.23"/>
    </reaction>
</comment>
<comment type="pathway">
    <text evidence="1">Pyrimidine metabolism; UMP biosynthesis via de novo pathway; UMP from orotate: step 2/2.</text>
</comment>
<comment type="similarity">
    <text evidence="1">Belongs to the OMP decarboxylase family. Type 2 subfamily.</text>
</comment>
<accession>C1FLB3</accession>
<protein>
    <recommendedName>
        <fullName evidence="1">Orotidine 5'-phosphate decarboxylase</fullName>
        <ecNumber evidence="1">4.1.1.23</ecNumber>
    </recommendedName>
    <alternativeName>
        <fullName evidence="1">OMP decarboxylase</fullName>
        <shortName evidence="1">OMPDCase</shortName>
        <shortName evidence="1">OMPdecase</shortName>
    </alternativeName>
</protein>
<keyword id="KW-0210">Decarboxylase</keyword>
<keyword id="KW-0456">Lyase</keyword>
<keyword id="KW-0665">Pyrimidine biosynthesis</keyword>
<feature type="chain" id="PRO_1000164745" description="Orotidine 5'-phosphate decarboxylase">
    <location>
        <begin position="1"/>
        <end position="283"/>
    </location>
</feature>
<feature type="active site" description="Proton donor" evidence="1">
    <location>
        <position position="97"/>
    </location>
</feature>
<sequence length="283" mass="31961">MIIDKLYENVEKKGCVCVGLDTDISYLPKGFLNKFTNIEDAIFAFNQRIVDSTFDVSACYKVQIAYYEAMGIKGMILYKKTLEYIRKKGGIVIADIKRGDISATAKMYAKAHFEGDFESDFITLNPYMGMDTLEPYKDYFKNKEKGVFLLLRTSNEGSKDIQYLDLKDNKKVYNKVGEKIENIGKEFLGNCRYSSIGAVVGCTAEENNIRKELKHTFFLIPGYGAQGGKAEVAKYYLSGGNGGIVNSSRGILLAYKKYDEEGKNFEECARNEVINMKKTLQII</sequence>
<proteinExistence type="inferred from homology"/>